<keyword id="KW-0687">Ribonucleoprotein</keyword>
<keyword id="KW-0689">Ribosomal protein</keyword>
<keyword id="KW-0694">RNA-binding</keyword>
<keyword id="KW-0699">rRNA-binding</keyword>
<keyword id="KW-0820">tRNA-binding</keyword>
<name>RL16_BURM9</name>
<organism>
    <name type="scientific">Burkholderia mallei (strain NCTC 10229)</name>
    <dbReference type="NCBI Taxonomy" id="412022"/>
    <lineage>
        <taxon>Bacteria</taxon>
        <taxon>Pseudomonadati</taxon>
        <taxon>Pseudomonadota</taxon>
        <taxon>Betaproteobacteria</taxon>
        <taxon>Burkholderiales</taxon>
        <taxon>Burkholderiaceae</taxon>
        <taxon>Burkholderia</taxon>
        <taxon>pseudomallei group</taxon>
    </lineage>
</organism>
<gene>
    <name evidence="1" type="primary">rplP</name>
    <name type="ordered locus">BMA10229_A1931</name>
</gene>
<reference key="1">
    <citation type="journal article" date="2010" name="Genome Biol. Evol.">
        <title>Continuing evolution of Burkholderia mallei through genome reduction and large-scale rearrangements.</title>
        <authorList>
            <person name="Losada L."/>
            <person name="Ronning C.M."/>
            <person name="DeShazer D."/>
            <person name="Woods D."/>
            <person name="Fedorova N."/>
            <person name="Kim H.S."/>
            <person name="Shabalina S.A."/>
            <person name="Pearson T.R."/>
            <person name="Brinkac L."/>
            <person name="Tan P."/>
            <person name="Nandi T."/>
            <person name="Crabtree J."/>
            <person name="Badger J."/>
            <person name="Beckstrom-Sternberg S."/>
            <person name="Saqib M."/>
            <person name="Schutzer S.E."/>
            <person name="Keim P."/>
            <person name="Nierman W.C."/>
        </authorList>
    </citation>
    <scope>NUCLEOTIDE SEQUENCE [LARGE SCALE GENOMIC DNA]</scope>
    <source>
        <strain>NCTC 10229</strain>
    </source>
</reference>
<accession>A2S7I3</accession>
<dbReference type="EMBL" id="CP000546">
    <property type="protein sequence ID" value="ABN03769.1"/>
    <property type="molecule type" value="Genomic_DNA"/>
</dbReference>
<dbReference type="RefSeq" id="WP_004199857.1">
    <property type="nucleotide sequence ID" value="NC_008836.1"/>
</dbReference>
<dbReference type="SMR" id="A2S7I3"/>
<dbReference type="GeneID" id="93061825"/>
<dbReference type="KEGG" id="bml:BMA10229_A1931"/>
<dbReference type="HOGENOM" id="CLU_078858_2_1_4"/>
<dbReference type="Proteomes" id="UP000002283">
    <property type="component" value="Chromosome I"/>
</dbReference>
<dbReference type="GO" id="GO:0022625">
    <property type="term" value="C:cytosolic large ribosomal subunit"/>
    <property type="evidence" value="ECO:0007669"/>
    <property type="project" value="TreeGrafter"/>
</dbReference>
<dbReference type="GO" id="GO:0019843">
    <property type="term" value="F:rRNA binding"/>
    <property type="evidence" value="ECO:0007669"/>
    <property type="project" value="UniProtKB-UniRule"/>
</dbReference>
<dbReference type="GO" id="GO:0003735">
    <property type="term" value="F:structural constituent of ribosome"/>
    <property type="evidence" value="ECO:0007669"/>
    <property type="project" value="InterPro"/>
</dbReference>
<dbReference type="GO" id="GO:0000049">
    <property type="term" value="F:tRNA binding"/>
    <property type="evidence" value="ECO:0007669"/>
    <property type="project" value="UniProtKB-KW"/>
</dbReference>
<dbReference type="GO" id="GO:0006412">
    <property type="term" value="P:translation"/>
    <property type="evidence" value="ECO:0007669"/>
    <property type="project" value="UniProtKB-UniRule"/>
</dbReference>
<dbReference type="CDD" id="cd01433">
    <property type="entry name" value="Ribosomal_L16_L10e"/>
    <property type="match status" value="1"/>
</dbReference>
<dbReference type="FunFam" id="3.90.1170.10:FF:000001">
    <property type="entry name" value="50S ribosomal protein L16"/>
    <property type="match status" value="1"/>
</dbReference>
<dbReference type="Gene3D" id="3.90.1170.10">
    <property type="entry name" value="Ribosomal protein L10e/L16"/>
    <property type="match status" value="1"/>
</dbReference>
<dbReference type="HAMAP" id="MF_01342">
    <property type="entry name" value="Ribosomal_uL16"/>
    <property type="match status" value="1"/>
</dbReference>
<dbReference type="InterPro" id="IPR047873">
    <property type="entry name" value="Ribosomal_uL16"/>
</dbReference>
<dbReference type="InterPro" id="IPR000114">
    <property type="entry name" value="Ribosomal_uL16_bact-type"/>
</dbReference>
<dbReference type="InterPro" id="IPR020798">
    <property type="entry name" value="Ribosomal_uL16_CS"/>
</dbReference>
<dbReference type="InterPro" id="IPR016180">
    <property type="entry name" value="Ribosomal_uL16_dom"/>
</dbReference>
<dbReference type="InterPro" id="IPR036920">
    <property type="entry name" value="Ribosomal_uL16_sf"/>
</dbReference>
<dbReference type="NCBIfam" id="TIGR01164">
    <property type="entry name" value="rplP_bact"/>
    <property type="match status" value="1"/>
</dbReference>
<dbReference type="PANTHER" id="PTHR12220">
    <property type="entry name" value="50S/60S RIBOSOMAL PROTEIN L16"/>
    <property type="match status" value="1"/>
</dbReference>
<dbReference type="PANTHER" id="PTHR12220:SF13">
    <property type="entry name" value="LARGE RIBOSOMAL SUBUNIT PROTEIN UL16M"/>
    <property type="match status" value="1"/>
</dbReference>
<dbReference type="Pfam" id="PF00252">
    <property type="entry name" value="Ribosomal_L16"/>
    <property type="match status" value="1"/>
</dbReference>
<dbReference type="PRINTS" id="PR00060">
    <property type="entry name" value="RIBOSOMALL16"/>
</dbReference>
<dbReference type="SUPFAM" id="SSF54686">
    <property type="entry name" value="Ribosomal protein L16p/L10e"/>
    <property type="match status" value="1"/>
</dbReference>
<dbReference type="PROSITE" id="PS00586">
    <property type="entry name" value="RIBOSOMAL_L16_1"/>
    <property type="match status" value="1"/>
</dbReference>
<evidence type="ECO:0000255" key="1">
    <source>
        <dbReference type="HAMAP-Rule" id="MF_01342"/>
    </source>
</evidence>
<evidence type="ECO:0000256" key="2">
    <source>
        <dbReference type="SAM" id="MobiDB-lite"/>
    </source>
</evidence>
<evidence type="ECO:0000305" key="3"/>
<comment type="function">
    <text evidence="1">Binds 23S rRNA and is also seen to make contacts with the A and possibly P site tRNAs.</text>
</comment>
<comment type="subunit">
    <text evidence="1">Part of the 50S ribosomal subunit.</text>
</comment>
<comment type="similarity">
    <text evidence="1">Belongs to the universal ribosomal protein uL16 family.</text>
</comment>
<sequence length="138" mass="15583">MLQPKRRKYRKEQKGRNTGIATRGNAVSFGEFGLKAVGRGRLTARQIEAARRAMTRHIKRGGRIWIRIFPDKPISQKPAEVRMGNGKGNPEYYVAEIQPGKMLYEMDGVSEELAREAFRLAAAKLPLKTTFIVRQLGA</sequence>
<feature type="chain" id="PRO_1000054590" description="Large ribosomal subunit protein uL16">
    <location>
        <begin position="1"/>
        <end position="138"/>
    </location>
</feature>
<feature type="region of interest" description="Disordered" evidence="2">
    <location>
        <begin position="1"/>
        <end position="20"/>
    </location>
</feature>
<feature type="compositionally biased region" description="Basic residues" evidence="2">
    <location>
        <begin position="1"/>
        <end position="13"/>
    </location>
</feature>
<protein>
    <recommendedName>
        <fullName evidence="1">Large ribosomal subunit protein uL16</fullName>
    </recommendedName>
    <alternativeName>
        <fullName evidence="3">50S ribosomal protein L16</fullName>
    </alternativeName>
</protein>
<proteinExistence type="inferred from homology"/>